<reference key="1">
    <citation type="journal article" date="2002" name="J. Bacteriol.">
        <title>Whole-genome comparison of Mycobacterium tuberculosis clinical and laboratory strains.</title>
        <authorList>
            <person name="Fleischmann R.D."/>
            <person name="Alland D."/>
            <person name="Eisen J.A."/>
            <person name="Carpenter L."/>
            <person name="White O."/>
            <person name="Peterson J.D."/>
            <person name="DeBoy R.T."/>
            <person name="Dodson R.J."/>
            <person name="Gwinn M.L."/>
            <person name="Haft D.H."/>
            <person name="Hickey E.K."/>
            <person name="Kolonay J.F."/>
            <person name="Nelson W.C."/>
            <person name="Umayam L.A."/>
            <person name="Ermolaeva M.D."/>
            <person name="Salzberg S.L."/>
            <person name="Delcher A."/>
            <person name="Utterback T.R."/>
            <person name="Weidman J.F."/>
            <person name="Khouri H.M."/>
            <person name="Gill J."/>
            <person name="Mikula A."/>
            <person name="Bishai W."/>
            <person name="Jacobs W.R. Jr."/>
            <person name="Venter J.C."/>
            <person name="Fraser C.M."/>
        </authorList>
    </citation>
    <scope>NUCLEOTIDE SEQUENCE [LARGE SCALE GENOMIC DNA]</scope>
    <source>
        <strain>CDC 1551 / Oshkosh</strain>
    </source>
</reference>
<organism>
    <name type="scientific">Mycobacterium tuberculosis (strain CDC 1551 / Oshkosh)</name>
    <dbReference type="NCBI Taxonomy" id="83331"/>
    <lineage>
        <taxon>Bacteria</taxon>
        <taxon>Bacillati</taxon>
        <taxon>Actinomycetota</taxon>
        <taxon>Actinomycetes</taxon>
        <taxon>Mycobacteriales</taxon>
        <taxon>Mycobacteriaceae</taxon>
        <taxon>Mycobacterium</taxon>
        <taxon>Mycobacterium tuberculosis complex</taxon>
    </lineage>
</organism>
<keyword id="KW-1185">Reference proteome</keyword>
<name>Y036_MYCTO</name>
<protein>
    <recommendedName>
        <fullName>Uncharacterized protein MT0041</fullName>
    </recommendedName>
</protein>
<accession>P9WM90</accession>
<accession>L0T448</accession>
<accession>P64675</accession>
<accession>P71606</accession>
<sequence length="257" mass="27546">MADPGPFVADLRAESDDLDALVAHLPADRWADPTPAPGWTIAHQIGHLLWTDRVALTAVTDEAGFAELMTAAAANPAGFVDDAATELAAVSPAELLTDWRVTRGRLHEELLAVPDGRKLAWFGPPMSAASMATARLMETWAHGLDVADALGVIRPATQRLRSIAHLGVRTRDYAFIVNNLTPPAEPFLVELRGPSGDTWSWGPSDAAQRVTGSAEDFCFLVTQRRALSTLDVNAVGEDAQRWLTIAQAFAGPPGRGR</sequence>
<dbReference type="EMBL" id="AE000516">
    <property type="protein sequence ID" value="AAK44264.1"/>
    <property type="molecule type" value="Genomic_DNA"/>
</dbReference>
<dbReference type="PIR" id="B70702">
    <property type="entry name" value="B70702"/>
</dbReference>
<dbReference type="RefSeq" id="WP_003400427.1">
    <property type="nucleotide sequence ID" value="NZ_KK341227.1"/>
</dbReference>
<dbReference type="SMR" id="P9WM90"/>
<dbReference type="KEGG" id="mtc:MT0041"/>
<dbReference type="PATRIC" id="fig|83331.31.peg.41"/>
<dbReference type="HOGENOM" id="CLU_067335_0_0_11"/>
<dbReference type="Proteomes" id="UP000001020">
    <property type="component" value="Chromosome"/>
</dbReference>
<dbReference type="GO" id="GO:0046872">
    <property type="term" value="F:metal ion binding"/>
    <property type="evidence" value="ECO:0007669"/>
    <property type="project" value="InterPro"/>
</dbReference>
<dbReference type="FunFam" id="1.20.120.450:FF:000003">
    <property type="entry name" value="TIGR03084 family protein"/>
    <property type="match status" value="1"/>
</dbReference>
<dbReference type="Gene3D" id="1.20.120.450">
    <property type="entry name" value="dinb family like domain"/>
    <property type="match status" value="1"/>
</dbReference>
<dbReference type="InterPro" id="IPR017518">
    <property type="entry name" value="CHP03084"/>
</dbReference>
<dbReference type="InterPro" id="IPR034660">
    <property type="entry name" value="DinB/YfiT-like"/>
</dbReference>
<dbReference type="InterPro" id="IPR017517">
    <property type="entry name" value="Maleyloyr_isom"/>
</dbReference>
<dbReference type="InterPro" id="IPR024344">
    <property type="entry name" value="MDMPI_metal-binding"/>
</dbReference>
<dbReference type="InterPro" id="IPR013917">
    <property type="entry name" value="tRNA_wybutosine-synth"/>
</dbReference>
<dbReference type="NCBIfam" id="TIGR03083">
    <property type="entry name" value="maleylpyruvate isomerase family mycothiol-dependent enzyme"/>
    <property type="match status" value="1"/>
</dbReference>
<dbReference type="NCBIfam" id="TIGR03084">
    <property type="entry name" value="TIGR03084 family metal-binding protein"/>
    <property type="match status" value="1"/>
</dbReference>
<dbReference type="Pfam" id="PF11716">
    <property type="entry name" value="MDMPI_N"/>
    <property type="match status" value="1"/>
</dbReference>
<dbReference type="Pfam" id="PF08608">
    <property type="entry name" value="Wyosine_form"/>
    <property type="match status" value="1"/>
</dbReference>
<dbReference type="SUPFAM" id="SSF109854">
    <property type="entry name" value="DinB/YfiT-like putative metalloenzymes"/>
    <property type="match status" value="1"/>
</dbReference>
<proteinExistence type="predicted"/>
<feature type="chain" id="PRO_0000427345" description="Uncharacterized protein MT0041">
    <location>
        <begin position="1"/>
        <end position="257"/>
    </location>
</feature>
<gene>
    <name type="ordered locus">MT0041</name>
</gene>